<dbReference type="EC" id="4.2.1.147" evidence="1"/>
<dbReference type="EC" id="4.1.2.43" evidence="1"/>
<dbReference type="EMBL" id="AE000782">
    <property type="protein sequence ID" value="AAB89943.1"/>
    <property type="molecule type" value="Genomic_DNA"/>
</dbReference>
<dbReference type="PIR" id="H69412">
    <property type="entry name" value="H69412"/>
</dbReference>
<dbReference type="RefSeq" id="WP_010878802.1">
    <property type="nucleotide sequence ID" value="NC_000917.1"/>
</dbReference>
<dbReference type="SMR" id="O28964"/>
<dbReference type="STRING" id="224325.AF_1305"/>
<dbReference type="PaxDb" id="224325-AF_1305"/>
<dbReference type="EnsemblBacteria" id="AAB89943">
    <property type="protein sequence ID" value="AAB89943"/>
    <property type="gene ID" value="AF_1305"/>
</dbReference>
<dbReference type="KEGG" id="afu:AF_1305"/>
<dbReference type="eggNOG" id="arCOG00103">
    <property type="taxonomic scope" value="Archaea"/>
</dbReference>
<dbReference type="HOGENOM" id="CLU_701335_0_0_2"/>
<dbReference type="OrthoDB" id="64276at2157"/>
<dbReference type="PhylomeDB" id="O28964"/>
<dbReference type="UniPathway" id="UPA00293"/>
<dbReference type="Proteomes" id="UP000002199">
    <property type="component" value="Chromosome"/>
</dbReference>
<dbReference type="GO" id="GO:0033982">
    <property type="term" value="F:3-dehydro-L-gulonate-6-phosphate decarboxylase activity"/>
    <property type="evidence" value="ECO:0007669"/>
    <property type="project" value="TreeGrafter"/>
</dbReference>
<dbReference type="GO" id="GO:0016840">
    <property type="term" value="F:carbon-nitrogen lyase activity"/>
    <property type="evidence" value="ECO:0007669"/>
    <property type="project" value="InterPro"/>
</dbReference>
<dbReference type="GO" id="GO:0043801">
    <property type="term" value="F:hexulose-6-phosphate synthase activity"/>
    <property type="evidence" value="ECO:0007669"/>
    <property type="project" value="UniProtKB-UniRule"/>
</dbReference>
<dbReference type="GO" id="GO:0016836">
    <property type="term" value="F:hydro-lyase activity"/>
    <property type="evidence" value="ECO:0007669"/>
    <property type="project" value="UniProtKB-UniRule"/>
</dbReference>
<dbReference type="GO" id="GO:0004590">
    <property type="term" value="F:orotidine-5'-phosphate decarboxylase activity"/>
    <property type="evidence" value="ECO:0007669"/>
    <property type="project" value="InterPro"/>
</dbReference>
<dbReference type="GO" id="GO:0006207">
    <property type="term" value="P:'de novo' pyrimidine nucleobase biosynthetic process"/>
    <property type="evidence" value="ECO:0007669"/>
    <property type="project" value="InterPro"/>
</dbReference>
<dbReference type="GO" id="GO:0016051">
    <property type="term" value="P:carbohydrate biosynthetic process"/>
    <property type="evidence" value="ECO:0007669"/>
    <property type="project" value="UniProtKB-UniRule"/>
</dbReference>
<dbReference type="GO" id="GO:0019854">
    <property type="term" value="P:L-ascorbic acid catabolic process"/>
    <property type="evidence" value="ECO:0007669"/>
    <property type="project" value="TreeGrafter"/>
</dbReference>
<dbReference type="CDD" id="cd04726">
    <property type="entry name" value="KGPDC_HPS"/>
    <property type="match status" value="1"/>
</dbReference>
<dbReference type="FunFam" id="3.30.230.60:FF:000001">
    <property type="entry name" value="5,6,7,8-tetrahydromethanopterin hydro-lyase"/>
    <property type="match status" value="1"/>
</dbReference>
<dbReference type="Gene3D" id="3.20.20.70">
    <property type="entry name" value="Aldolase class I"/>
    <property type="match status" value="1"/>
</dbReference>
<dbReference type="Gene3D" id="3.30.230.60">
    <property type="entry name" value="Formaldehyde-activating enzyme"/>
    <property type="match status" value="1"/>
</dbReference>
<dbReference type="HAMAP" id="MF_01268">
    <property type="entry name" value="Fae_Hps"/>
    <property type="match status" value="1"/>
</dbReference>
<dbReference type="InterPro" id="IPR013785">
    <property type="entry name" value="Aldolase_TIM"/>
</dbReference>
<dbReference type="InterPro" id="IPR020868">
    <property type="entry name" value="Fae/Hps"/>
</dbReference>
<dbReference type="InterPro" id="IPR014826">
    <property type="entry name" value="HCHO-activating_enzyme"/>
</dbReference>
<dbReference type="InterPro" id="IPR037075">
    <property type="entry name" value="HCHO-activating_enzyme_sf"/>
</dbReference>
<dbReference type="InterPro" id="IPR041710">
    <property type="entry name" value="HPS/KGPDC"/>
</dbReference>
<dbReference type="InterPro" id="IPR001754">
    <property type="entry name" value="OMPdeCOase_dom"/>
</dbReference>
<dbReference type="InterPro" id="IPR020568">
    <property type="entry name" value="Ribosomal_Su5_D2-typ_SF"/>
</dbReference>
<dbReference type="InterPro" id="IPR011060">
    <property type="entry name" value="RibuloseP-bd_barrel"/>
</dbReference>
<dbReference type="NCBIfam" id="TIGR03126">
    <property type="entry name" value="one_C_fae"/>
    <property type="match status" value="1"/>
</dbReference>
<dbReference type="NCBIfam" id="NF009833">
    <property type="entry name" value="PRK13307.1"/>
    <property type="match status" value="1"/>
</dbReference>
<dbReference type="PANTHER" id="PTHR35039">
    <property type="entry name" value="3-KETO-L-GULONATE-6-PHOSPHATE DECARBOXYLASE SGBH-RELATED"/>
    <property type="match status" value="1"/>
</dbReference>
<dbReference type="PANTHER" id="PTHR35039:SF3">
    <property type="entry name" value="3-KETO-L-GULONATE-6-PHOSPHATE DECARBOXYLASE SGBH-RELATED"/>
    <property type="match status" value="1"/>
</dbReference>
<dbReference type="Pfam" id="PF08714">
    <property type="entry name" value="Fae"/>
    <property type="match status" value="1"/>
</dbReference>
<dbReference type="Pfam" id="PF00215">
    <property type="entry name" value="OMPdecase"/>
    <property type="match status" value="1"/>
</dbReference>
<dbReference type="SMART" id="SM00934">
    <property type="entry name" value="OMPdecase"/>
    <property type="match status" value="1"/>
</dbReference>
<dbReference type="SUPFAM" id="SSF54211">
    <property type="entry name" value="Ribosomal protein S5 domain 2-like"/>
    <property type="match status" value="1"/>
</dbReference>
<dbReference type="SUPFAM" id="SSF51366">
    <property type="entry name" value="Ribulose-phoshate binding barrel"/>
    <property type="match status" value="1"/>
</dbReference>
<sequence>MEFRIGEALIGEGFEVAHVDLIIGTKDSPAGIAFANALANLSAGHTPLLAVLRPNLITKPPAVIVPKVTVKDMHQAELIFGPAQAAVAKAVADAVEEGIIPRERADEYVVVASVFIHPNAKNKHKIYYYNYGATKLAIKRAMQNFPDVDTVLYEKDRSFHPFVGRKLTKLWDPPYLQIAIDIPDLGEVLKVLEQIPDSDHIVFEVGTPLAKRYGCEVILKLREVKPDAFYILDLKTLDVGNLEARMAADATANAVVISGLAPTSTIVKGIREAEKTGILSYVDMMNVDDPIKRLEEIQKAGVLPNVVELHRAIDSEDKEPPWMLAGKIKEKFSVLVAVAGGIRPENVEEVIAAGADIIVVGRAVTKARDVEGAVRKFMSHMKPDTDQFRIMTDF</sequence>
<proteinExistence type="inferred from homology"/>
<name>FAEHP_ARCFU</name>
<comment type="function">
    <text evidence="1">Catalyzes the condensation of formaldehyde with tetrahydromethanopterin (H(4)MPT) to 5,10-methylenetetrahydromethanopterin.</text>
</comment>
<comment type="function">
    <text evidence="1">Catalyzes the reversible formation of ribulose-5-phosphate and formaldehyde from 3-hexulose-6-phosphate.</text>
</comment>
<comment type="catalytic activity">
    <reaction evidence="1">
        <text>5,6,7,8-tetrahydromethanopterin + formaldehyde = 5,10-methylenetetrahydromethanopterin + H2O</text>
        <dbReference type="Rhea" id="RHEA:24678"/>
        <dbReference type="ChEBI" id="CHEBI:15377"/>
        <dbReference type="ChEBI" id="CHEBI:16842"/>
        <dbReference type="ChEBI" id="CHEBI:57818"/>
        <dbReference type="ChEBI" id="CHEBI:58103"/>
        <dbReference type="EC" id="4.2.1.147"/>
    </reaction>
</comment>
<comment type="catalytic activity">
    <reaction evidence="1">
        <text>D-ribulose 5-phosphate + formaldehyde = D-arabino-hex-3-ulose 6-phosphate</text>
        <dbReference type="Rhea" id="RHEA:25201"/>
        <dbReference type="ChEBI" id="CHEBI:16842"/>
        <dbReference type="ChEBI" id="CHEBI:58121"/>
        <dbReference type="ChEBI" id="CHEBI:58542"/>
        <dbReference type="EC" id="4.1.2.43"/>
    </reaction>
</comment>
<comment type="pathway">
    <text evidence="1">Carbohydrate biosynthesis; D-ribose 5-phosphate biosynthesis.</text>
</comment>
<comment type="similarity">
    <text evidence="1">In the N-terminal section; belongs to the formaldehyde-activating enzyme family.</text>
</comment>
<comment type="similarity">
    <text evidence="1">In the C-terminal section; belongs to the HPS/KGPDC family. HPS subfamily.</text>
</comment>
<gene>
    <name evidence="1" type="primary">fae-hps</name>
    <name type="ordered locus">AF_1305</name>
</gene>
<reference key="1">
    <citation type="journal article" date="1997" name="Nature">
        <title>The complete genome sequence of the hyperthermophilic, sulphate-reducing archaeon Archaeoglobus fulgidus.</title>
        <authorList>
            <person name="Klenk H.-P."/>
            <person name="Clayton R.A."/>
            <person name="Tomb J.-F."/>
            <person name="White O."/>
            <person name="Nelson K.E."/>
            <person name="Ketchum K.A."/>
            <person name="Dodson R.J."/>
            <person name="Gwinn M.L."/>
            <person name="Hickey E.K."/>
            <person name="Peterson J.D."/>
            <person name="Richardson D.L."/>
            <person name="Kerlavage A.R."/>
            <person name="Graham D.E."/>
            <person name="Kyrpides N.C."/>
            <person name="Fleischmann R.D."/>
            <person name="Quackenbush J."/>
            <person name="Lee N.H."/>
            <person name="Sutton G.G."/>
            <person name="Gill S.R."/>
            <person name="Kirkness E.F."/>
            <person name="Dougherty B.A."/>
            <person name="McKenney K."/>
            <person name="Adams M.D."/>
            <person name="Loftus B.J."/>
            <person name="Peterson S.N."/>
            <person name="Reich C.I."/>
            <person name="McNeil L.K."/>
            <person name="Badger J.H."/>
            <person name="Glodek A."/>
            <person name="Zhou L."/>
            <person name="Overbeek R."/>
            <person name="Gocayne J.D."/>
            <person name="Weidman J.F."/>
            <person name="McDonald L.A."/>
            <person name="Utterback T.R."/>
            <person name="Cotton M.D."/>
            <person name="Spriggs T."/>
            <person name="Artiach P."/>
            <person name="Kaine B.P."/>
            <person name="Sykes S.M."/>
            <person name="Sadow P.W."/>
            <person name="D'Andrea K.P."/>
            <person name="Bowman C."/>
            <person name="Fujii C."/>
            <person name="Garland S.A."/>
            <person name="Mason T.M."/>
            <person name="Olsen G.J."/>
            <person name="Fraser C.M."/>
            <person name="Smith H.O."/>
            <person name="Woese C.R."/>
            <person name="Venter J.C."/>
        </authorList>
    </citation>
    <scope>NUCLEOTIDE SEQUENCE [LARGE SCALE GENOMIC DNA]</scope>
    <source>
        <strain>ATCC 49558 / DSM 4304 / JCM 9628 / NBRC 100126 / VC-16</strain>
    </source>
</reference>
<protein>
    <recommendedName>
        <fullName evidence="1">Bifunctional enzyme Fae/Hps</fullName>
    </recommendedName>
    <domain>
        <recommendedName>
            <fullName evidence="1">5,6,7,8-tetrahydromethanopterin hydro-lyase</fullName>
            <ecNumber evidence="1">4.2.1.147</ecNumber>
        </recommendedName>
        <alternativeName>
            <fullName evidence="1">Formaldehyde-activating enzyme</fullName>
            <shortName evidence="1">Fae</shortName>
        </alternativeName>
    </domain>
    <domain>
        <recommendedName>
            <fullName evidence="1">3-hexulose-6-phosphate synthase</fullName>
            <shortName evidence="1">HPS</shortName>
            <ecNumber evidence="1">4.1.2.43</ecNumber>
        </recommendedName>
        <alternativeName>
            <fullName evidence="1">D-arabino-3-hexulose-6-phosphate formaldehyde lyase</fullName>
        </alternativeName>
    </domain>
</protein>
<feature type="chain" id="PRO_0000236083" description="Bifunctional enzyme Fae/Hps">
    <location>
        <begin position="1"/>
        <end position="394"/>
    </location>
</feature>
<feature type="region of interest" description="Formaldehyde-activating enzyme" evidence="1">
    <location>
        <begin position="1"/>
        <end position="162"/>
    </location>
</feature>
<feature type="region of interest" description="3-hexulose-6-phosphate synthase" evidence="1">
    <location>
        <begin position="163"/>
        <end position="394"/>
    </location>
</feature>
<feature type="active site" description="Proton donor" evidence="1">
    <location>
        <position position="18"/>
    </location>
</feature>
<feature type="binding site" evidence="1">
    <location>
        <position position="20"/>
    </location>
    <ligand>
        <name>substrate</name>
    </ligand>
</feature>
<feature type="binding site" evidence="1">
    <location>
        <position position="49"/>
    </location>
    <ligand>
        <name>substrate</name>
    </ligand>
</feature>
<feature type="binding site" evidence="1">
    <location>
        <position position="67"/>
    </location>
    <ligand>
        <name>substrate</name>
    </ligand>
</feature>
<feature type="binding site" evidence="1">
    <location>
        <position position="69"/>
    </location>
    <ligand>
        <name>substrate</name>
    </ligand>
</feature>
<feature type="binding site" evidence="1">
    <location>
        <position position="84"/>
    </location>
    <ligand>
        <name>substrate</name>
    </ligand>
</feature>
<accession>O28964</accession>
<keyword id="KW-0119">Carbohydrate metabolism</keyword>
<keyword id="KW-0456">Lyase</keyword>
<keyword id="KW-0511">Multifunctional enzyme</keyword>
<keyword id="KW-1185">Reference proteome</keyword>
<evidence type="ECO:0000255" key="1">
    <source>
        <dbReference type="HAMAP-Rule" id="MF_01268"/>
    </source>
</evidence>
<organism>
    <name type="scientific">Archaeoglobus fulgidus (strain ATCC 49558 / DSM 4304 / JCM 9628 / NBRC 100126 / VC-16)</name>
    <dbReference type="NCBI Taxonomy" id="224325"/>
    <lineage>
        <taxon>Archaea</taxon>
        <taxon>Methanobacteriati</taxon>
        <taxon>Methanobacteriota</taxon>
        <taxon>Archaeoglobi</taxon>
        <taxon>Archaeoglobales</taxon>
        <taxon>Archaeoglobaceae</taxon>
        <taxon>Archaeoglobus</taxon>
    </lineage>
</organism>